<protein>
    <recommendedName>
        <fullName evidence="1">2-C-methyl-D-erythritol 4-phosphate cytidylyltransferase</fullName>
        <ecNumber evidence="1">2.7.7.60</ecNumber>
    </recommendedName>
    <alternativeName>
        <fullName evidence="1">4-diphosphocytidyl-2C-methyl-D-erythritol synthase</fullName>
    </alternativeName>
    <alternativeName>
        <fullName evidence="1">MEP cytidylyltransferase</fullName>
        <shortName evidence="1">MCT</shortName>
    </alternativeName>
</protein>
<dbReference type="EC" id="2.7.7.60" evidence="1"/>
<dbReference type="EMBL" id="AE015451">
    <property type="protein sequence ID" value="AAN67235.1"/>
    <property type="molecule type" value="Genomic_DNA"/>
</dbReference>
<dbReference type="RefSeq" id="NP_743771.1">
    <property type="nucleotide sequence ID" value="NC_002947.4"/>
</dbReference>
<dbReference type="RefSeq" id="WP_010952686.1">
    <property type="nucleotide sequence ID" value="NZ_CP169744.1"/>
</dbReference>
<dbReference type="SMR" id="Q88MF7"/>
<dbReference type="STRING" id="160488.PP_1614"/>
<dbReference type="PaxDb" id="160488-PP_1614"/>
<dbReference type="GeneID" id="83681907"/>
<dbReference type="KEGG" id="ppu:PP_1614"/>
<dbReference type="PATRIC" id="fig|160488.4.peg.1705"/>
<dbReference type="eggNOG" id="COG1211">
    <property type="taxonomic scope" value="Bacteria"/>
</dbReference>
<dbReference type="HOGENOM" id="CLU_061281_3_1_6"/>
<dbReference type="OrthoDB" id="9806837at2"/>
<dbReference type="PhylomeDB" id="Q88MF7"/>
<dbReference type="BioCyc" id="PPUT160488:G1G01-1711-MONOMER"/>
<dbReference type="UniPathway" id="UPA00056">
    <property type="reaction ID" value="UER00093"/>
</dbReference>
<dbReference type="Proteomes" id="UP000000556">
    <property type="component" value="Chromosome"/>
</dbReference>
<dbReference type="GO" id="GO:0050518">
    <property type="term" value="F:2-C-methyl-D-erythritol 4-phosphate cytidylyltransferase activity"/>
    <property type="evidence" value="ECO:0007669"/>
    <property type="project" value="UniProtKB-UniRule"/>
</dbReference>
<dbReference type="GO" id="GO:0019288">
    <property type="term" value="P:isopentenyl diphosphate biosynthetic process, methylerythritol 4-phosphate pathway"/>
    <property type="evidence" value="ECO:0007669"/>
    <property type="project" value="UniProtKB-UniRule"/>
</dbReference>
<dbReference type="CDD" id="cd02516">
    <property type="entry name" value="CDP-ME_synthetase"/>
    <property type="match status" value="1"/>
</dbReference>
<dbReference type="FunFam" id="3.90.550.10:FF:000003">
    <property type="entry name" value="2-C-methyl-D-erythritol 4-phosphate cytidylyltransferase"/>
    <property type="match status" value="1"/>
</dbReference>
<dbReference type="Gene3D" id="3.90.550.10">
    <property type="entry name" value="Spore Coat Polysaccharide Biosynthesis Protein SpsA, Chain A"/>
    <property type="match status" value="1"/>
</dbReference>
<dbReference type="HAMAP" id="MF_00108">
    <property type="entry name" value="IspD"/>
    <property type="match status" value="1"/>
</dbReference>
<dbReference type="InterPro" id="IPR001228">
    <property type="entry name" value="IspD"/>
</dbReference>
<dbReference type="InterPro" id="IPR034683">
    <property type="entry name" value="IspD/TarI"/>
</dbReference>
<dbReference type="InterPro" id="IPR050088">
    <property type="entry name" value="IspD/TarI_cytidylyltransf_bact"/>
</dbReference>
<dbReference type="InterPro" id="IPR018294">
    <property type="entry name" value="ISPD_synthase_CS"/>
</dbReference>
<dbReference type="InterPro" id="IPR029044">
    <property type="entry name" value="Nucleotide-diphossugar_trans"/>
</dbReference>
<dbReference type="NCBIfam" id="TIGR00453">
    <property type="entry name" value="ispD"/>
    <property type="match status" value="1"/>
</dbReference>
<dbReference type="PANTHER" id="PTHR32125">
    <property type="entry name" value="2-C-METHYL-D-ERYTHRITOL 4-PHOSPHATE CYTIDYLYLTRANSFERASE, CHLOROPLASTIC"/>
    <property type="match status" value="1"/>
</dbReference>
<dbReference type="PANTHER" id="PTHR32125:SF4">
    <property type="entry name" value="2-C-METHYL-D-ERYTHRITOL 4-PHOSPHATE CYTIDYLYLTRANSFERASE, CHLOROPLASTIC"/>
    <property type="match status" value="1"/>
</dbReference>
<dbReference type="Pfam" id="PF01128">
    <property type="entry name" value="IspD"/>
    <property type="match status" value="1"/>
</dbReference>
<dbReference type="SUPFAM" id="SSF53448">
    <property type="entry name" value="Nucleotide-diphospho-sugar transferases"/>
    <property type="match status" value="1"/>
</dbReference>
<dbReference type="PROSITE" id="PS01295">
    <property type="entry name" value="ISPD"/>
    <property type="match status" value="1"/>
</dbReference>
<gene>
    <name evidence="1" type="primary">ispD</name>
    <name type="ordered locus">PP_1614</name>
</gene>
<organism>
    <name type="scientific">Pseudomonas putida (strain ATCC 47054 / DSM 6125 / CFBP 8728 / NCIMB 11950 / KT2440)</name>
    <dbReference type="NCBI Taxonomy" id="160488"/>
    <lineage>
        <taxon>Bacteria</taxon>
        <taxon>Pseudomonadati</taxon>
        <taxon>Pseudomonadota</taxon>
        <taxon>Gammaproteobacteria</taxon>
        <taxon>Pseudomonadales</taxon>
        <taxon>Pseudomonadaceae</taxon>
        <taxon>Pseudomonas</taxon>
    </lineage>
</organism>
<accession>Q88MF7</accession>
<comment type="function">
    <text evidence="1">Catalyzes the formation of 4-diphosphocytidyl-2-C-methyl-D-erythritol from CTP and 2-C-methyl-D-erythritol 4-phosphate (MEP).</text>
</comment>
<comment type="catalytic activity">
    <reaction evidence="1">
        <text>2-C-methyl-D-erythritol 4-phosphate + CTP + H(+) = 4-CDP-2-C-methyl-D-erythritol + diphosphate</text>
        <dbReference type="Rhea" id="RHEA:13429"/>
        <dbReference type="ChEBI" id="CHEBI:15378"/>
        <dbReference type="ChEBI" id="CHEBI:33019"/>
        <dbReference type="ChEBI" id="CHEBI:37563"/>
        <dbReference type="ChEBI" id="CHEBI:57823"/>
        <dbReference type="ChEBI" id="CHEBI:58262"/>
        <dbReference type="EC" id="2.7.7.60"/>
    </reaction>
</comment>
<comment type="pathway">
    <text evidence="1">Isoprenoid biosynthesis; isopentenyl diphosphate biosynthesis via DXP pathway; isopentenyl diphosphate from 1-deoxy-D-xylulose 5-phosphate: step 2/6.</text>
</comment>
<comment type="similarity">
    <text evidence="1">Belongs to the IspD/TarI cytidylyltransferase family. IspD subfamily.</text>
</comment>
<keyword id="KW-0414">Isoprene biosynthesis</keyword>
<keyword id="KW-0548">Nucleotidyltransferase</keyword>
<keyword id="KW-1185">Reference proteome</keyword>
<keyword id="KW-0808">Transferase</keyword>
<proteinExistence type="inferred from homology"/>
<sequence length="235" mass="25577">MIDILPAFWAVIPAAGVGARMAADRPKQYLELAGQTLLEHSLDCFLGHPALKGVVVSIAEDDPYWPGLRCASDPRIHCAAGGRERADSVLNALLVLHAQGAADSDWVLVHDAARPNLARSDLDKLLSELADDPVGGLLAVPARDTLKRADSHGRVSATVDRSTIWQAYTPQMFRLGALHRALAECLVSDVVVTDEASAIEWSGQAPRLVEGRSDNIKVTRPEDLEWLRQRWAGKR</sequence>
<evidence type="ECO:0000255" key="1">
    <source>
        <dbReference type="HAMAP-Rule" id="MF_00108"/>
    </source>
</evidence>
<reference key="1">
    <citation type="journal article" date="2002" name="Environ. Microbiol.">
        <title>Complete genome sequence and comparative analysis of the metabolically versatile Pseudomonas putida KT2440.</title>
        <authorList>
            <person name="Nelson K.E."/>
            <person name="Weinel C."/>
            <person name="Paulsen I.T."/>
            <person name="Dodson R.J."/>
            <person name="Hilbert H."/>
            <person name="Martins dos Santos V.A.P."/>
            <person name="Fouts D.E."/>
            <person name="Gill S.R."/>
            <person name="Pop M."/>
            <person name="Holmes M."/>
            <person name="Brinkac L.M."/>
            <person name="Beanan M.J."/>
            <person name="DeBoy R.T."/>
            <person name="Daugherty S.C."/>
            <person name="Kolonay J.F."/>
            <person name="Madupu R."/>
            <person name="Nelson W.C."/>
            <person name="White O."/>
            <person name="Peterson J.D."/>
            <person name="Khouri H.M."/>
            <person name="Hance I."/>
            <person name="Chris Lee P."/>
            <person name="Holtzapple E.K."/>
            <person name="Scanlan D."/>
            <person name="Tran K."/>
            <person name="Moazzez A."/>
            <person name="Utterback T.R."/>
            <person name="Rizzo M."/>
            <person name="Lee K."/>
            <person name="Kosack D."/>
            <person name="Moestl D."/>
            <person name="Wedler H."/>
            <person name="Lauber J."/>
            <person name="Stjepandic D."/>
            <person name="Hoheisel J."/>
            <person name="Straetz M."/>
            <person name="Heim S."/>
            <person name="Kiewitz C."/>
            <person name="Eisen J.A."/>
            <person name="Timmis K.N."/>
            <person name="Duesterhoeft A."/>
            <person name="Tuemmler B."/>
            <person name="Fraser C.M."/>
        </authorList>
    </citation>
    <scope>NUCLEOTIDE SEQUENCE [LARGE SCALE GENOMIC DNA]</scope>
    <source>
        <strain>ATCC 47054 / DSM 6125 / CFBP 8728 / NCIMB 11950 / KT2440</strain>
    </source>
</reference>
<name>ISPD_PSEPK</name>
<feature type="chain" id="PRO_0000075605" description="2-C-methyl-D-erythritol 4-phosphate cytidylyltransferase">
    <location>
        <begin position="1"/>
        <end position="235"/>
    </location>
</feature>
<feature type="site" description="Transition state stabilizer" evidence="1">
    <location>
        <position position="20"/>
    </location>
</feature>
<feature type="site" description="Transition state stabilizer" evidence="1">
    <location>
        <position position="27"/>
    </location>
</feature>
<feature type="site" description="Positions MEP for the nucleophilic attack" evidence="1">
    <location>
        <position position="161"/>
    </location>
</feature>
<feature type="site" description="Positions MEP for the nucleophilic attack" evidence="1">
    <location>
        <position position="217"/>
    </location>
</feature>